<comment type="function">
    <text>This protein is involved in control of the biosynthesis of tryptophan.</text>
</comment>
<reference key="1">
    <citation type="journal article" date="1997" name="Curr. Microbiol.">
        <title>Isolation and characterization of the Azospirillum brasilense trpE(G) gene, encoding anthranilate synthase.</title>
        <authorList>
            <person name="de Troch P."/>
            <person name="Dosselaere F."/>
            <person name="Keijers V."/>
            <person name="de Wilde P."/>
            <person name="Vanderleyden J."/>
        </authorList>
    </citation>
    <scope>NUCLEOTIDE SEQUENCE [GENOMIC DNA]</scope>
    <source>
        <strain>ATCC 29145 / DSM 1690 / IMET 11303 / Sp7</strain>
    </source>
</reference>
<gene>
    <name type="primary">trpL</name>
</gene>
<dbReference type="EMBL" id="U44127">
    <property type="protein sequence ID" value="AAC45140.1"/>
    <property type="molecule type" value="Genomic_DNA"/>
</dbReference>
<dbReference type="GO" id="GO:0000162">
    <property type="term" value="P:L-tryptophan biosynthetic process"/>
    <property type="evidence" value="ECO:0007669"/>
    <property type="project" value="UniProtKB-KW"/>
</dbReference>
<organism>
    <name type="scientific">Azospirillum brasilense</name>
    <dbReference type="NCBI Taxonomy" id="192"/>
    <lineage>
        <taxon>Bacteria</taxon>
        <taxon>Pseudomonadati</taxon>
        <taxon>Pseudomonadota</taxon>
        <taxon>Alphaproteobacteria</taxon>
        <taxon>Rhodospirillales</taxon>
        <taxon>Azospirillaceae</taxon>
        <taxon>Azospirillum</taxon>
    </lineage>
</organism>
<feature type="peptide" id="PRO_0000044020" description="trp operon leader peptide">
    <location>
        <begin position="1"/>
        <end position="17"/>
    </location>
</feature>
<proteinExistence type="predicted"/>
<name>LPW_AZOBR</name>
<protein>
    <recommendedName>
        <fullName>trp operon leader peptide</fullName>
    </recommendedName>
</protein>
<keyword id="KW-0028">Amino-acid biosynthesis</keyword>
<keyword id="KW-0057">Aromatic amino acid biosynthesis</keyword>
<keyword id="KW-0428">Leader peptide</keyword>
<keyword id="KW-0822">Tryptophan biosynthesis</keyword>
<sequence>MIFVATSLSCRWWWPVM</sequence>
<accession>P50871</accession>